<comment type="function">
    <text evidence="1">Catalyzes the condensation of (S)-aspartate-beta-semialdehyde [(S)-ASA] and pyruvate to 4-hydroxy-tetrahydrodipicolinate (HTPA).</text>
</comment>
<comment type="catalytic activity">
    <reaction evidence="1">
        <text>L-aspartate 4-semialdehyde + pyruvate = (2S,4S)-4-hydroxy-2,3,4,5-tetrahydrodipicolinate + H2O + H(+)</text>
        <dbReference type="Rhea" id="RHEA:34171"/>
        <dbReference type="ChEBI" id="CHEBI:15361"/>
        <dbReference type="ChEBI" id="CHEBI:15377"/>
        <dbReference type="ChEBI" id="CHEBI:15378"/>
        <dbReference type="ChEBI" id="CHEBI:67139"/>
        <dbReference type="ChEBI" id="CHEBI:537519"/>
        <dbReference type="EC" id="4.3.3.7"/>
    </reaction>
</comment>
<comment type="pathway">
    <text evidence="1">Amino-acid biosynthesis; L-lysine biosynthesis via DAP pathway; (S)-tetrahydrodipicolinate from L-aspartate: step 3/4.</text>
</comment>
<comment type="subunit">
    <text evidence="1">Homotetramer; dimer of dimers.</text>
</comment>
<comment type="subcellular location">
    <subcellularLocation>
        <location evidence="1">Cytoplasm</location>
    </subcellularLocation>
</comment>
<comment type="similarity">
    <text evidence="1">Belongs to the DapA family.</text>
</comment>
<comment type="caution">
    <text evidence="2">Was originally thought to be a dihydrodipicolinate synthase (DHDPS), catalyzing the condensation of (S)-aspartate-beta-semialdehyde [(S)-ASA] and pyruvate to dihydrodipicolinate (DHDP). However, it was shown in E.coli that the product of the enzymatic reaction is not dihydrodipicolinate but in fact (4S)-4-hydroxy-2,3,4,5-tetrahydro-(2S)-dipicolinic acid (HTPA), and that the consecutive dehydration reaction leading to DHDP is not spontaneous but catalyzed by DapB.</text>
</comment>
<accession>Q04FS1</accession>
<reference key="1">
    <citation type="journal article" date="2006" name="Proc. Natl. Acad. Sci. U.S.A.">
        <title>Comparative genomics of the lactic acid bacteria.</title>
        <authorList>
            <person name="Makarova K.S."/>
            <person name="Slesarev A."/>
            <person name="Wolf Y.I."/>
            <person name="Sorokin A."/>
            <person name="Mirkin B."/>
            <person name="Koonin E.V."/>
            <person name="Pavlov A."/>
            <person name="Pavlova N."/>
            <person name="Karamychev V."/>
            <person name="Polouchine N."/>
            <person name="Shakhova V."/>
            <person name="Grigoriev I."/>
            <person name="Lou Y."/>
            <person name="Rohksar D."/>
            <person name="Lucas S."/>
            <person name="Huang K."/>
            <person name="Goodstein D.M."/>
            <person name="Hawkins T."/>
            <person name="Plengvidhya V."/>
            <person name="Welker D."/>
            <person name="Hughes J."/>
            <person name="Goh Y."/>
            <person name="Benson A."/>
            <person name="Baldwin K."/>
            <person name="Lee J.-H."/>
            <person name="Diaz-Muniz I."/>
            <person name="Dosti B."/>
            <person name="Smeianov V."/>
            <person name="Wechter W."/>
            <person name="Barabote R."/>
            <person name="Lorca G."/>
            <person name="Altermann E."/>
            <person name="Barrangou R."/>
            <person name="Ganesan B."/>
            <person name="Xie Y."/>
            <person name="Rawsthorne H."/>
            <person name="Tamir D."/>
            <person name="Parker C."/>
            <person name="Breidt F."/>
            <person name="Broadbent J.R."/>
            <person name="Hutkins R."/>
            <person name="O'Sullivan D."/>
            <person name="Steele J."/>
            <person name="Unlu G."/>
            <person name="Saier M.H. Jr."/>
            <person name="Klaenhammer T."/>
            <person name="Richardson P."/>
            <person name="Kozyavkin S."/>
            <person name="Weimer B.C."/>
            <person name="Mills D.A."/>
        </authorList>
    </citation>
    <scope>NUCLEOTIDE SEQUENCE [LARGE SCALE GENOMIC DNA]</scope>
    <source>
        <strain>ATCC BAA-331 / PSU-1</strain>
    </source>
</reference>
<dbReference type="EC" id="4.3.3.7" evidence="1"/>
<dbReference type="EMBL" id="CP000411">
    <property type="protein sequence ID" value="ABJ56701.1"/>
    <property type="molecule type" value="Genomic_DNA"/>
</dbReference>
<dbReference type="RefSeq" id="WP_002817351.1">
    <property type="nucleotide sequence ID" value="NC_008528.1"/>
</dbReference>
<dbReference type="SMR" id="Q04FS1"/>
<dbReference type="STRING" id="203123.OEOE_0774"/>
<dbReference type="GeneID" id="75066151"/>
<dbReference type="KEGG" id="ooe:OEOE_0774"/>
<dbReference type="eggNOG" id="COG0329">
    <property type="taxonomic scope" value="Bacteria"/>
</dbReference>
<dbReference type="HOGENOM" id="CLU_049343_7_1_9"/>
<dbReference type="UniPathway" id="UPA00034">
    <property type="reaction ID" value="UER00017"/>
</dbReference>
<dbReference type="Proteomes" id="UP000000774">
    <property type="component" value="Chromosome"/>
</dbReference>
<dbReference type="GO" id="GO:0005829">
    <property type="term" value="C:cytosol"/>
    <property type="evidence" value="ECO:0007669"/>
    <property type="project" value="TreeGrafter"/>
</dbReference>
<dbReference type="GO" id="GO:0008840">
    <property type="term" value="F:4-hydroxy-tetrahydrodipicolinate synthase activity"/>
    <property type="evidence" value="ECO:0007669"/>
    <property type="project" value="UniProtKB-UniRule"/>
</dbReference>
<dbReference type="GO" id="GO:0019877">
    <property type="term" value="P:diaminopimelate biosynthetic process"/>
    <property type="evidence" value="ECO:0007669"/>
    <property type="project" value="UniProtKB-UniRule"/>
</dbReference>
<dbReference type="GO" id="GO:0009089">
    <property type="term" value="P:lysine biosynthetic process via diaminopimelate"/>
    <property type="evidence" value="ECO:0007669"/>
    <property type="project" value="UniProtKB-UniRule"/>
</dbReference>
<dbReference type="CDD" id="cd00950">
    <property type="entry name" value="DHDPS"/>
    <property type="match status" value="1"/>
</dbReference>
<dbReference type="Gene3D" id="3.20.20.70">
    <property type="entry name" value="Aldolase class I"/>
    <property type="match status" value="1"/>
</dbReference>
<dbReference type="HAMAP" id="MF_00418">
    <property type="entry name" value="DapA"/>
    <property type="match status" value="1"/>
</dbReference>
<dbReference type="InterPro" id="IPR013785">
    <property type="entry name" value="Aldolase_TIM"/>
</dbReference>
<dbReference type="InterPro" id="IPR005263">
    <property type="entry name" value="DapA"/>
</dbReference>
<dbReference type="InterPro" id="IPR002220">
    <property type="entry name" value="DapA-like"/>
</dbReference>
<dbReference type="InterPro" id="IPR020625">
    <property type="entry name" value="Schiff_base-form_aldolases_AS"/>
</dbReference>
<dbReference type="NCBIfam" id="TIGR00674">
    <property type="entry name" value="dapA"/>
    <property type="match status" value="1"/>
</dbReference>
<dbReference type="PANTHER" id="PTHR12128:SF66">
    <property type="entry name" value="4-HYDROXY-2-OXOGLUTARATE ALDOLASE, MITOCHONDRIAL"/>
    <property type="match status" value="1"/>
</dbReference>
<dbReference type="PANTHER" id="PTHR12128">
    <property type="entry name" value="DIHYDRODIPICOLINATE SYNTHASE"/>
    <property type="match status" value="1"/>
</dbReference>
<dbReference type="Pfam" id="PF00701">
    <property type="entry name" value="DHDPS"/>
    <property type="match status" value="1"/>
</dbReference>
<dbReference type="PIRSF" id="PIRSF001365">
    <property type="entry name" value="DHDPS"/>
    <property type="match status" value="1"/>
</dbReference>
<dbReference type="PRINTS" id="PR00146">
    <property type="entry name" value="DHPICSNTHASE"/>
</dbReference>
<dbReference type="SMART" id="SM01130">
    <property type="entry name" value="DHDPS"/>
    <property type="match status" value="1"/>
</dbReference>
<dbReference type="SUPFAM" id="SSF51569">
    <property type="entry name" value="Aldolase"/>
    <property type="match status" value="1"/>
</dbReference>
<dbReference type="PROSITE" id="PS00666">
    <property type="entry name" value="DHDPS_2"/>
    <property type="match status" value="1"/>
</dbReference>
<feature type="chain" id="PRO_0000340974" description="4-hydroxy-tetrahydrodipicolinate synthase">
    <location>
        <begin position="1"/>
        <end position="292"/>
    </location>
</feature>
<feature type="active site" description="Proton donor/acceptor" evidence="1">
    <location>
        <position position="139"/>
    </location>
</feature>
<feature type="active site" description="Schiff-base intermediate with substrate" evidence="1">
    <location>
        <position position="167"/>
    </location>
</feature>
<feature type="binding site" evidence="1">
    <location>
        <position position="50"/>
    </location>
    <ligand>
        <name>pyruvate</name>
        <dbReference type="ChEBI" id="CHEBI:15361"/>
    </ligand>
</feature>
<feature type="binding site" evidence="1">
    <location>
        <position position="208"/>
    </location>
    <ligand>
        <name>pyruvate</name>
        <dbReference type="ChEBI" id="CHEBI:15361"/>
    </ligand>
</feature>
<feature type="site" description="Part of a proton relay during catalysis" evidence="1">
    <location>
        <position position="49"/>
    </location>
</feature>
<feature type="site" description="Part of a proton relay during catalysis" evidence="1">
    <location>
        <position position="113"/>
    </location>
</feature>
<gene>
    <name evidence="1" type="primary">dapA</name>
    <name type="ordered locus">OEOE_0774</name>
</gene>
<evidence type="ECO:0000255" key="1">
    <source>
        <dbReference type="HAMAP-Rule" id="MF_00418"/>
    </source>
</evidence>
<evidence type="ECO:0000305" key="2"/>
<proteinExistence type="inferred from homology"/>
<organism>
    <name type="scientific">Oenococcus oeni (strain ATCC BAA-331 / PSU-1)</name>
    <dbReference type="NCBI Taxonomy" id="203123"/>
    <lineage>
        <taxon>Bacteria</taxon>
        <taxon>Bacillati</taxon>
        <taxon>Bacillota</taxon>
        <taxon>Bacilli</taxon>
        <taxon>Lactobacillales</taxon>
        <taxon>Lactobacillaceae</taxon>
        <taxon>Oenococcus</taxon>
    </lineage>
</organism>
<protein>
    <recommendedName>
        <fullName evidence="1">4-hydroxy-tetrahydrodipicolinate synthase</fullName>
        <shortName evidence="1">HTPA synthase</shortName>
        <ecNumber evidence="1">4.3.3.7</ecNumber>
    </recommendedName>
</protein>
<keyword id="KW-0028">Amino-acid biosynthesis</keyword>
<keyword id="KW-0963">Cytoplasm</keyword>
<keyword id="KW-0220">Diaminopimelate biosynthesis</keyword>
<keyword id="KW-0456">Lyase</keyword>
<keyword id="KW-0457">Lysine biosynthesis</keyword>
<keyword id="KW-1185">Reference proteome</keyword>
<keyword id="KW-0704">Schiff base</keyword>
<name>DAPA_OENOB</name>
<sequence length="292" mass="31937">MTNLLENTNLLTAIITPFDKNNRIDFQVYRRLIDSQISDGVKGFVISGTTGEAPTLSHDEKIELFKRTVDFVSGRAKVIVGTGSNNTKETIEFTKEAGRINGIDAALIVTPYYNKPDQAGMIAHFSTIADESPLPIVIYNIPGRSISALTVESLLKLADHPNIIAVKQCNSDYDMSELIEHAPKDFLVYTGEDGQSFLNYALGGAGTISVASHFYAKEFADMFSAIDNGDFKKAAGDFRFINPRVKALFSYPSPAPVKAVFKRSGIDVGIPRLPILPLDKAQTDGIMQVLKL</sequence>